<proteinExistence type="inferred from homology"/>
<organism>
    <name type="scientific">Xanthomonas campestris pv. campestris (strain B100)</name>
    <dbReference type="NCBI Taxonomy" id="509169"/>
    <lineage>
        <taxon>Bacteria</taxon>
        <taxon>Pseudomonadati</taxon>
        <taxon>Pseudomonadota</taxon>
        <taxon>Gammaproteobacteria</taxon>
        <taxon>Lysobacterales</taxon>
        <taxon>Lysobacteraceae</taxon>
        <taxon>Xanthomonas</taxon>
    </lineage>
</organism>
<comment type="function">
    <text evidence="1">This protein is involved in the repair of mismatches in DNA. It is required for dam-dependent methyl-directed DNA mismatch repair. May act as a 'molecular matchmaker', a protein that promotes the formation of a stable complex between two or more DNA-binding proteins in an ATP-dependent manner without itself being part of a final effector complex.</text>
</comment>
<comment type="similarity">
    <text evidence="1">Belongs to the DNA mismatch repair MutL/HexB family.</text>
</comment>
<protein>
    <recommendedName>
        <fullName evidence="1">DNA mismatch repair protein MutL</fullName>
    </recommendedName>
</protein>
<evidence type="ECO:0000255" key="1">
    <source>
        <dbReference type="HAMAP-Rule" id="MF_00149"/>
    </source>
</evidence>
<sequence length="624" mass="67194">MAIRQLPEILINQIAAGEVVERPASVVKELVENALDAGATRVDIDLEEGGVRLIRIRDNGGGIAPEELPLAVSRHATSKIASLDDLETVATLGFRGEALPSIASVSRFTLASRRPDAEHGSALQIEGGRLGEVMPRAHAPGTTVEVRELFFNVPARRKFLRAERTELGHIEEWLRSLALARPDVELRVSHNGKPSRRYKPGDLYSDARLGETLGEDFARQALRVDHSGAGLRLHGWVAQPHYSRASTDQQYLYVNGRSVRDRSVAHAVKMAYGDVLFHGRQPAYVLFLELDPARVDVNVHPAKHEVRFREARLIHDFVYRTLQDALAQTRAGALPADVGVGGAAALGIGAVAAQGGGSYVADAGAGHPGAGSGSGYASWAPSQAPLGLRVDEARAAYAALYAPAAGSALRDDGQPVLSGTGLPATAHDSGVPPLGYAVAQLHGIYILAENAEGLIVVDMHAAHERIGYERLKQAHDSIGLHAQPLLVPMTLAVGEREADTAEREADTLASLGFEITRSGPQSLHVRSIPALLANADPEALLRDVLGDLREHGQSRRIATARDELLSTMACHGAVRANRRLTVPEMNALLRDMEATERSGQCNHGRPTWARFTLGEIDRWFLRGR</sequence>
<name>MUTL_XANCB</name>
<dbReference type="EMBL" id="AM920689">
    <property type="protein sequence ID" value="CAP51233.1"/>
    <property type="molecule type" value="Genomic_DNA"/>
</dbReference>
<dbReference type="SMR" id="B0RRZ8"/>
<dbReference type="KEGG" id="xca:xcc-b100_1880"/>
<dbReference type="HOGENOM" id="CLU_004131_4_2_6"/>
<dbReference type="Proteomes" id="UP000001188">
    <property type="component" value="Chromosome"/>
</dbReference>
<dbReference type="GO" id="GO:0032300">
    <property type="term" value="C:mismatch repair complex"/>
    <property type="evidence" value="ECO:0007669"/>
    <property type="project" value="InterPro"/>
</dbReference>
<dbReference type="GO" id="GO:0005524">
    <property type="term" value="F:ATP binding"/>
    <property type="evidence" value="ECO:0007669"/>
    <property type="project" value="InterPro"/>
</dbReference>
<dbReference type="GO" id="GO:0016887">
    <property type="term" value="F:ATP hydrolysis activity"/>
    <property type="evidence" value="ECO:0007669"/>
    <property type="project" value="InterPro"/>
</dbReference>
<dbReference type="GO" id="GO:0140664">
    <property type="term" value="F:ATP-dependent DNA damage sensor activity"/>
    <property type="evidence" value="ECO:0007669"/>
    <property type="project" value="InterPro"/>
</dbReference>
<dbReference type="GO" id="GO:0030983">
    <property type="term" value="F:mismatched DNA binding"/>
    <property type="evidence" value="ECO:0007669"/>
    <property type="project" value="InterPro"/>
</dbReference>
<dbReference type="GO" id="GO:0006298">
    <property type="term" value="P:mismatch repair"/>
    <property type="evidence" value="ECO:0007669"/>
    <property type="project" value="UniProtKB-UniRule"/>
</dbReference>
<dbReference type="CDD" id="cd16926">
    <property type="entry name" value="HATPase_MutL-MLH-PMS-like"/>
    <property type="match status" value="1"/>
</dbReference>
<dbReference type="CDD" id="cd03482">
    <property type="entry name" value="MutL_Trans_MutL"/>
    <property type="match status" value="1"/>
</dbReference>
<dbReference type="FunFam" id="3.30.230.10:FF:000013">
    <property type="entry name" value="DNA mismatch repair endonuclease MutL"/>
    <property type="match status" value="1"/>
</dbReference>
<dbReference type="FunFam" id="3.30.565.10:FF:000003">
    <property type="entry name" value="DNA mismatch repair endonuclease MutL"/>
    <property type="match status" value="1"/>
</dbReference>
<dbReference type="FunFam" id="3.30.1370.100:FF:000005">
    <property type="entry name" value="DNA mismatch repair protein MutL"/>
    <property type="match status" value="1"/>
</dbReference>
<dbReference type="Gene3D" id="3.30.230.10">
    <property type="match status" value="1"/>
</dbReference>
<dbReference type="Gene3D" id="3.30.565.10">
    <property type="entry name" value="Histidine kinase-like ATPase, C-terminal domain"/>
    <property type="match status" value="1"/>
</dbReference>
<dbReference type="Gene3D" id="3.30.1540.20">
    <property type="entry name" value="MutL, C-terminal domain, dimerisation subdomain"/>
    <property type="match status" value="1"/>
</dbReference>
<dbReference type="Gene3D" id="3.30.1370.100">
    <property type="entry name" value="MutL, C-terminal domain, regulatory subdomain"/>
    <property type="match status" value="1"/>
</dbReference>
<dbReference type="HAMAP" id="MF_00149">
    <property type="entry name" value="DNA_mis_repair"/>
    <property type="match status" value="1"/>
</dbReference>
<dbReference type="InterPro" id="IPR014762">
    <property type="entry name" value="DNA_mismatch_repair_CS"/>
</dbReference>
<dbReference type="InterPro" id="IPR020667">
    <property type="entry name" value="DNA_mismatch_repair_MutL"/>
</dbReference>
<dbReference type="InterPro" id="IPR013507">
    <property type="entry name" value="DNA_mismatch_S5_2-like"/>
</dbReference>
<dbReference type="InterPro" id="IPR036890">
    <property type="entry name" value="HATPase_C_sf"/>
</dbReference>
<dbReference type="InterPro" id="IPR002099">
    <property type="entry name" value="MutL/Mlh/PMS"/>
</dbReference>
<dbReference type="InterPro" id="IPR038973">
    <property type="entry name" value="MutL/Mlh/Pms-like"/>
</dbReference>
<dbReference type="InterPro" id="IPR014790">
    <property type="entry name" value="MutL_C"/>
</dbReference>
<dbReference type="InterPro" id="IPR042120">
    <property type="entry name" value="MutL_C_dimsub"/>
</dbReference>
<dbReference type="InterPro" id="IPR042121">
    <property type="entry name" value="MutL_C_regsub"/>
</dbReference>
<dbReference type="InterPro" id="IPR037198">
    <property type="entry name" value="MutL_C_sf"/>
</dbReference>
<dbReference type="InterPro" id="IPR020568">
    <property type="entry name" value="Ribosomal_Su5_D2-typ_SF"/>
</dbReference>
<dbReference type="InterPro" id="IPR014721">
    <property type="entry name" value="Ribsml_uS5_D2-typ_fold_subgr"/>
</dbReference>
<dbReference type="NCBIfam" id="TIGR00585">
    <property type="entry name" value="mutl"/>
    <property type="match status" value="1"/>
</dbReference>
<dbReference type="NCBIfam" id="NF000949">
    <property type="entry name" value="PRK00095.1-2"/>
    <property type="match status" value="1"/>
</dbReference>
<dbReference type="PANTHER" id="PTHR10073">
    <property type="entry name" value="DNA MISMATCH REPAIR PROTEIN MLH, PMS, MUTL"/>
    <property type="match status" value="1"/>
</dbReference>
<dbReference type="PANTHER" id="PTHR10073:SF12">
    <property type="entry name" value="DNA MISMATCH REPAIR PROTEIN MLH1"/>
    <property type="match status" value="1"/>
</dbReference>
<dbReference type="Pfam" id="PF01119">
    <property type="entry name" value="DNA_mis_repair"/>
    <property type="match status" value="1"/>
</dbReference>
<dbReference type="Pfam" id="PF13589">
    <property type="entry name" value="HATPase_c_3"/>
    <property type="match status" value="1"/>
</dbReference>
<dbReference type="Pfam" id="PF08676">
    <property type="entry name" value="MutL_C"/>
    <property type="match status" value="1"/>
</dbReference>
<dbReference type="SMART" id="SM01340">
    <property type="entry name" value="DNA_mis_repair"/>
    <property type="match status" value="1"/>
</dbReference>
<dbReference type="SMART" id="SM00853">
    <property type="entry name" value="MutL_C"/>
    <property type="match status" value="1"/>
</dbReference>
<dbReference type="SUPFAM" id="SSF55874">
    <property type="entry name" value="ATPase domain of HSP90 chaperone/DNA topoisomerase II/histidine kinase"/>
    <property type="match status" value="1"/>
</dbReference>
<dbReference type="SUPFAM" id="SSF118116">
    <property type="entry name" value="DNA mismatch repair protein MutL"/>
    <property type="match status" value="1"/>
</dbReference>
<dbReference type="SUPFAM" id="SSF54211">
    <property type="entry name" value="Ribosomal protein S5 domain 2-like"/>
    <property type="match status" value="1"/>
</dbReference>
<dbReference type="PROSITE" id="PS00058">
    <property type="entry name" value="DNA_MISMATCH_REPAIR_1"/>
    <property type="match status" value="1"/>
</dbReference>
<reference key="1">
    <citation type="journal article" date="2008" name="J. Biotechnol.">
        <title>The genome of Xanthomonas campestris pv. campestris B100 and its use for the reconstruction of metabolic pathways involved in xanthan biosynthesis.</title>
        <authorList>
            <person name="Vorhoelter F.-J."/>
            <person name="Schneiker S."/>
            <person name="Goesmann A."/>
            <person name="Krause L."/>
            <person name="Bekel T."/>
            <person name="Kaiser O."/>
            <person name="Linke B."/>
            <person name="Patschkowski T."/>
            <person name="Rueckert C."/>
            <person name="Schmid J."/>
            <person name="Sidhu V.K."/>
            <person name="Sieber V."/>
            <person name="Tauch A."/>
            <person name="Watt S.A."/>
            <person name="Weisshaar B."/>
            <person name="Becker A."/>
            <person name="Niehaus K."/>
            <person name="Puehler A."/>
        </authorList>
    </citation>
    <scope>NUCLEOTIDE SEQUENCE [LARGE SCALE GENOMIC DNA]</scope>
    <source>
        <strain>B100</strain>
    </source>
</reference>
<feature type="chain" id="PRO_1000096700" description="DNA mismatch repair protein MutL">
    <location>
        <begin position="1"/>
        <end position="624"/>
    </location>
</feature>
<gene>
    <name evidence="1" type="primary">mutL</name>
    <name type="ordered locus">xcc-b100_1880</name>
</gene>
<keyword id="KW-0227">DNA damage</keyword>
<keyword id="KW-0234">DNA repair</keyword>
<accession>B0RRZ8</accession>